<comment type="function">
    <text>Catalyzes the oxidation of uric acid to 5-hydroxyisourate, which is further processed to form (S)-allantoin.</text>
</comment>
<comment type="catalytic activity">
    <reaction>
        <text>urate + O2 + H2O = 5-hydroxyisourate + H2O2</text>
        <dbReference type="Rhea" id="RHEA:21368"/>
        <dbReference type="ChEBI" id="CHEBI:15377"/>
        <dbReference type="ChEBI" id="CHEBI:15379"/>
        <dbReference type="ChEBI" id="CHEBI:16240"/>
        <dbReference type="ChEBI" id="CHEBI:17775"/>
        <dbReference type="ChEBI" id="CHEBI:18072"/>
        <dbReference type="EC" id="1.7.3.3"/>
    </reaction>
</comment>
<comment type="activity regulation">
    <text>Repressed by 20-hydroxyecdysone.</text>
</comment>
<comment type="pathway">
    <text>Purine metabolism; urate degradation; (S)-allantoin from urate: step 1/3.</text>
</comment>
<comment type="subcellular location">
    <subcellularLocation>
        <location>Peroxisome</location>
    </subcellularLocation>
</comment>
<comment type="tissue specificity">
    <text>Malpighian tubules.</text>
</comment>
<comment type="developmental stage">
    <text>Third instar larvae and adult.</text>
</comment>
<comment type="similarity">
    <text evidence="5">Belongs to the uricase family.</text>
</comment>
<comment type="sequence caution" evidence="5">
    <conflict type="erroneous gene model prediction">
        <sequence resource="EMBL-CDS" id="EAL33535"/>
    </conflict>
</comment>
<evidence type="ECO:0000250" key="1">
    <source>
        <dbReference type="UniProtKB" id="D0VWQ1"/>
    </source>
</evidence>
<evidence type="ECO:0000250" key="2">
    <source>
        <dbReference type="UniProtKB" id="Q00511"/>
    </source>
</evidence>
<evidence type="ECO:0000255" key="3"/>
<evidence type="ECO:0000256" key="4">
    <source>
        <dbReference type="SAM" id="MobiDB-lite"/>
    </source>
</evidence>
<evidence type="ECO:0000305" key="5"/>
<proteinExistence type="evidence at transcript level"/>
<accession>P22673</accession>
<accession>Q29N08</accession>
<accession>Q56RC8</accession>
<keyword id="KW-0560">Oxidoreductase</keyword>
<keyword id="KW-0576">Peroxisome</keyword>
<keyword id="KW-0659">Purine metabolism</keyword>
<keyword id="KW-1185">Reference proteome</keyword>
<name>URIC_DROPS</name>
<reference key="1">
    <citation type="journal article" date="1992" name="J. Mol. Evol.">
        <title>The urate oxidase gene of Drosophila pseudoobscura and Drosophila melanogaster: evolutionary changes of sequence and regulation.</title>
        <authorList>
            <person name="Friedman T.B."/>
            <person name="Burnett J.B."/>
            <person name="Lootens S."/>
            <person name="Wallrath L.L."/>
        </authorList>
    </citation>
    <scope>NUCLEOTIDE SEQUENCE [GENOMIC DNA]</scope>
    <source>
        <strain>AH133</strain>
    </source>
</reference>
<reference key="2">
    <citation type="journal article" date="2005" name="Genome Res.">
        <title>Comparative genome sequencing of Drosophila pseudoobscura: chromosomal, gene, and cis-element evolution.</title>
        <authorList>
            <person name="Richards S."/>
            <person name="Liu Y."/>
            <person name="Bettencourt B.R."/>
            <person name="Hradecky P."/>
            <person name="Letovsky S."/>
            <person name="Nielsen R."/>
            <person name="Thornton K."/>
            <person name="Hubisz M.J."/>
            <person name="Chen R."/>
            <person name="Meisel R.P."/>
            <person name="Couronne O."/>
            <person name="Hua S."/>
            <person name="Smith M.A."/>
            <person name="Zhang P."/>
            <person name="Liu J."/>
            <person name="Bussemaker H.J."/>
            <person name="van Batenburg M.F."/>
            <person name="Howells S.L."/>
            <person name="Scherer S.E."/>
            <person name="Sodergren E."/>
            <person name="Matthews B.B."/>
            <person name="Crosby M.A."/>
            <person name="Schroeder A.J."/>
            <person name="Ortiz-Barrientos D."/>
            <person name="Rives C.M."/>
            <person name="Metzker M.L."/>
            <person name="Muzny D.M."/>
            <person name="Scott G."/>
            <person name="Steffen D."/>
            <person name="Wheeler D.A."/>
            <person name="Worley K.C."/>
            <person name="Havlak P."/>
            <person name="Durbin K.J."/>
            <person name="Egan A."/>
            <person name="Gill R."/>
            <person name="Hume J."/>
            <person name="Morgan M.B."/>
            <person name="Miner G."/>
            <person name="Hamilton C."/>
            <person name="Huang Y."/>
            <person name="Waldron L."/>
            <person name="Verduzco D."/>
            <person name="Clerc-Blankenburg K.P."/>
            <person name="Dubchak I."/>
            <person name="Noor M.A.F."/>
            <person name="Anderson W."/>
            <person name="White K.P."/>
            <person name="Clark A.G."/>
            <person name="Schaeffer S.W."/>
            <person name="Gelbart W.M."/>
            <person name="Weinstock G.M."/>
            <person name="Gibbs R.A."/>
        </authorList>
    </citation>
    <scope>NUCLEOTIDE SEQUENCE [LARGE SCALE GENOMIC DNA]</scope>
    <source>
        <strain>MV2-25 / Tucson 14011-0121.94</strain>
    </source>
</reference>
<reference key="3">
    <citation type="journal article" date="2005" name="Genetics">
        <title>Patterns of selection on synonymous and nonsynonymous variants in Drosophila miranda.</title>
        <authorList>
            <person name="Bartolome C."/>
            <person name="Maside X."/>
            <person name="Yi S."/>
            <person name="Grant A.L."/>
            <person name="Charlesworth B."/>
        </authorList>
    </citation>
    <scope>NUCLEOTIDE SEQUENCE [GENOMIC DNA] OF 4-321</scope>
</reference>
<protein>
    <recommendedName>
        <fullName>Uricase</fullName>
        <ecNumber>1.7.3.3</ecNumber>
    </recommendedName>
    <alternativeName>
        <fullName>Urate oxidase</fullName>
    </alternativeName>
</protein>
<feature type="chain" id="PRO_0000165992" description="Uricase">
    <location>
        <begin position="1"/>
        <end position="346"/>
    </location>
</feature>
<feature type="region of interest" description="Disordered" evidence="4">
    <location>
        <begin position="1"/>
        <end position="23"/>
    </location>
</feature>
<feature type="short sequence motif" description="Microbody targeting signal" evidence="3">
    <location>
        <begin position="344"/>
        <end position="346"/>
    </location>
</feature>
<feature type="active site" description="Charge relay system" evidence="1">
    <location>
        <position position="39"/>
    </location>
</feature>
<feature type="active site" description="Charge relay system" evidence="1">
    <location>
        <position position="84"/>
    </location>
</feature>
<feature type="active site" description="Charge relay system" evidence="1">
    <location>
        <position position="302"/>
    </location>
</feature>
<feature type="binding site" evidence="2">
    <location>
        <position position="84"/>
    </location>
    <ligand>
        <name>urate</name>
        <dbReference type="ChEBI" id="CHEBI:17775"/>
    </ligand>
</feature>
<feature type="binding site" evidence="2">
    <location>
        <position position="85"/>
    </location>
    <ligand>
        <name>urate</name>
        <dbReference type="ChEBI" id="CHEBI:17775"/>
    </ligand>
</feature>
<feature type="binding site" evidence="2">
    <location>
        <position position="208"/>
    </location>
    <ligand>
        <name>urate</name>
        <dbReference type="ChEBI" id="CHEBI:17775"/>
    </ligand>
</feature>
<feature type="binding site" evidence="2">
    <location>
        <position position="225"/>
    </location>
    <ligand>
        <name>urate</name>
        <dbReference type="ChEBI" id="CHEBI:17775"/>
    </ligand>
</feature>
<feature type="binding site" evidence="2">
    <location>
        <position position="273"/>
    </location>
    <ligand>
        <name>urate</name>
        <dbReference type="ChEBI" id="CHEBI:17775"/>
    </ligand>
</feature>
<feature type="binding site" evidence="2">
    <location>
        <position position="274"/>
    </location>
    <ligand>
        <name>urate</name>
        <dbReference type="ChEBI" id="CHEBI:17775"/>
    </ligand>
</feature>
<feature type="binding site" evidence="2">
    <location>
        <position position="300"/>
    </location>
    <ligand>
        <name>urate</name>
        <dbReference type="ChEBI" id="CHEBI:17775"/>
    </ligand>
</feature>
<feature type="sequence conflict" description="In Ref. 3; AAX13154." evidence="5" ref="3">
    <original>M</original>
    <variation>I</variation>
    <location>
        <position position="21"/>
    </location>
</feature>
<feature type="sequence conflict" description="In Ref. 1; CAA40396." evidence="5" ref="1">
    <original>L</original>
    <variation>V</variation>
    <location>
        <position position="175"/>
    </location>
</feature>
<feature type="sequence conflict" description="In Ref. 1; CAA40396." evidence="5" ref="1">
    <location>
        <position position="186"/>
    </location>
</feature>
<sequence length="346" mass="39324">MFATPLRQPTNASGARPAVSMDGQETPFQYEITDHGYGKDAVKVLHVSRKGPVHTIQEFEVGTHLKLYSKKDYYQGNNSDIVATDSQKNTVYLLAKKYGIESPEKFALMLGQHFLNKYSHVEEAHVHVETYPWQRVCQEETKSVNNQGQGSCNNFTSIDNRSLHNHAFIFTPTALHYCDVVIRRTDPKQTVITGIKGLRVLKTTQSSFVNFVNDEFRSLPDQYDRIFSTVVDCSWEYSDTETVNFSRAWQTVKNIILRNFAGDPQVGVSSPSVQHTLYLSEKQVLDVIPQVSVISMTMPNKHYFNFDTKPFQKIVPGDNNEVFIPVDKPHGTIYAQLARKNISSHL</sequence>
<organism>
    <name type="scientific">Drosophila pseudoobscura pseudoobscura</name>
    <name type="common">Fruit fly</name>
    <dbReference type="NCBI Taxonomy" id="46245"/>
    <lineage>
        <taxon>Eukaryota</taxon>
        <taxon>Metazoa</taxon>
        <taxon>Ecdysozoa</taxon>
        <taxon>Arthropoda</taxon>
        <taxon>Hexapoda</taxon>
        <taxon>Insecta</taxon>
        <taxon>Pterygota</taxon>
        <taxon>Neoptera</taxon>
        <taxon>Endopterygota</taxon>
        <taxon>Diptera</taxon>
        <taxon>Brachycera</taxon>
        <taxon>Muscomorpha</taxon>
        <taxon>Ephydroidea</taxon>
        <taxon>Drosophilidae</taxon>
        <taxon>Drosophila</taxon>
        <taxon>Sophophora</taxon>
    </lineage>
</organism>
<gene>
    <name type="primary">Uro</name>
    <name type="synonym">UO</name>
    <name type="ORF">GA20153</name>
</gene>
<dbReference type="EC" id="1.7.3.3"/>
<dbReference type="EMBL" id="X57113">
    <property type="protein sequence ID" value="CAA40396.1"/>
    <property type="molecule type" value="Genomic_DNA"/>
</dbReference>
<dbReference type="EMBL" id="CH379060">
    <property type="protein sequence ID" value="EAL33535.1"/>
    <property type="status" value="ALT_SEQ"/>
    <property type="molecule type" value="Genomic_DNA"/>
</dbReference>
<dbReference type="EMBL" id="AY754579">
    <property type="protein sequence ID" value="AAX13154.1"/>
    <property type="molecule type" value="Genomic_DNA"/>
</dbReference>
<dbReference type="PIR" id="S29760">
    <property type="entry name" value="S29760"/>
</dbReference>
<dbReference type="RefSeq" id="XP_001356471.1">
    <property type="nucleotide sequence ID" value="XM_001356435.3"/>
</dbReference>
<dbReference type="SMR" id="P22673"/>
<dbReference type="FunCoup" id="P22673">
    <property type="interactions" value="214"/>
</dbReference>
<dbReference type="STRING" id="46245.P22673"/>
<dbReference type="EnsemblMetazoa" id="FBtr0281964">
    <property type="protein sequence ID" value="FBpp0280402"/>
    <property type="gene ID" value="FBgn0012716"/>
</dbReference>
<dbReference type="GeneID" id="4817128"/>
<dbReference type="KEGG" id="dpo:4817128"/>
<dbReference type="CTD" id="34060"/>
<dbReference type="eggNOG" id="KOG1599">
    <property type="taxonomic scope" value="Eukaryota"/>
</dbReference>
<dbReference type="HOGENOM" id="CLU_048151_1_0_1"/>
<dbReference type="InParanoid" id="P22673"/>
<dbReference type="OMA" id="ATMYKMS"/>
<dbReference type="PhylomeDB" id="P22673"/>
<dbReference type="UniPathway" id="UPA00394">
    <property type="reaction ID" value="UER00650"/>
</dbReference>
<dbReference type="Proteomes" id="UP000001819">
    <property type="component" value="Chromosome 4"/>
</dbReference>
<dbReference type="Bgee" id="FBgn0012716">
    <property type="expression patterns" value="Expressed in adult organism and 2 other cell types or tissues"/>
</dbReference>
<dbReference type="GO" id="GO:0005777">
    <property type="term" value="C:peroxisome"/>
    <property type="evidence" value="ECO:0007669"/>
    <property type="project" value="UniProtKB-SubCell"/>
</dbReference>
<dbReference type="GO" id="GO:0004846">
    <property type="term" value="F:urate oxidase activity"/>
    <property type="evidence" value="ECO:0007669"/>
    <property type="project" value="UniProtKB-EC"/>
</dbReference>
<dbReference type="GO" id="GO:0006145">
    <property type="term" value="P:purine nucleobase catabolic process"/>
    <property type="evidence" value="ECO:0007669"/>
    <property type="project" value="TreeGrafter"/>
</dbReference>
<dbReference type="GO" id="GO:0019628">
    <property type="term" value="P:urate catabolic process"/>
    <property type="evidence" value="ECO:0007669"/>
    <property type="project" value="UniProtKB-UniPathway"/>
</dbReference>
<dbReference type="CDD" id="cd00445">
    <property type="entry name" value="Uricase"/>
    <property type="match status" value="1"/>
</dbReference>
<dbReference type="FunFam" id="3.10.270.10:FF:000002">
    <property type="entry name" value="Uricase"/>
    <property type="match status" value="1"/>
</dbReference>
<dbReference type="Gene3D" id="3.10.270.10">
    <property type="entry name" value="Urate Oxidase"/>
    <property type="match status" value="1"/>
</dbReference>
<dbReference type="InterPro" id="IPR002042">
    <property type="entry name" value="Uricase"/>
</dbReference>
<dbReference type="InterPro" id="IPR019842">
    <property type="entry name" value="Uricase_CS"/>
</dbReference>
<dbReference type="NCBIfam" id="TIGR03383">
    <property type="entry name" value="urate_oxi"/>
    <property type="match status" value="1"/>
</dbReference>
<dbReference type="PANTHER" id="PTHR42874">
    <property type="entry name" value="URICASE"/>
    <property type="match status" value="1"/>
</dbReference>
<dbReference type="PANTHER" id="PTHR42874:SF1">
    <property type="entry name" value="URICASE"/>
    <property type="match status" value="1"/>
</dbReference>
<dbReference type="Pfam" id="PF01014">
    <property type="entry name" value="Uricase"/>
    <property type="match status" value="2"/>
</dbReference>
<dbReference type="PIRSF" id="PIRSF000241">
    <property type="entry name" value="Urate_oxidase"/>
    <property type="match status" value="1"/>
</dbReference>
<dbReference type="PRINTS" id="PR00093">
    <property type="entry name" value="URICASE"/>
</dbReference>
<dbReference type="SUPFAM" id="SSF55620">
    <property type="entry name" value="Tetrahydrobiopterin biosynthesis enzymes-like"/>
    <property type="match status" value="2"/>
</dbReference>
<dbReference type="PROSITE" id="PS00366">
    <property type="entry name" value="URICASE"/>
    <property type="match status" value="1"/>
</dbReference>